<comment type="function">
    <text evidence="1">ATP-binding RNA helicase involved in ribosome assembly.</text>
</comment>
<comment type="catalytic activity">
    <reaction>
        <text>ATP + H2O = ADP + phosphate + H(+)</text>
        <dbReference type="Rhea" id="RHEA:13065"/>
        <dbReference type="ChEBI" id="CHEBI:15377"/>
        <dbReference type="ChEBI" id="CHEBI:15378"/>
        <dbReference type="ChEBI" id="CHEBI:30616"/>
        <dbReference type="ChEBI" id="CHEBI:43474"/>
        <dbReference type="ChEBI" id="CHEBI:456216"/>
        <dbReference type="EC" id="3.6.4.13"/>
    </reaction>
</comment>
<comment type="subunit">
    <text evidence="1">Associates with pre-ribosomal particles.</text>
</comment>
<comment type="subcellular location">
    <subcellularLocation>
        <location evidence="1">Nucleus</location>
        <location evidence="1">Nucleolus</location>
    </subcellularLocation>
</comment>
<comment type="domain">
    <text>The Q motif is unique to and characteristic of the DEAD box family of RNA helicases and controls ATP binding and hydrolysis.</text>
</comment>
<comment type="similarity">
    <text evidence="6">Belongs to the DEAD box helicase family. DDX27/DRS1 subfamily.</text>
</comment>
<keyword id="KW-0067">ATP-binding</keyword>
<keyword id="KW-0175">Coiled coil</keyword>
<keyword id="KW-0347">Helicase</keyword>
<keyword id="KW-0378">Hydrolase</keyword>
<keyword id="KW-0547">Nucleotide-binding</keyword>
<keyword id="KW-0539">Nucleus</keyword>
<keyword id="KW-1185">Reference proteome</keyword>
<keyword id="KW-0690">Ribosome biogenesis</keyword>
<keyword id="KW-0694">RNA-binding</keyword>
<proteinExistence type="inferred from homology"/>
<feature type="chain" id="PRO_0000232249" description="ATP-dependent RNA helicase DRS1">
    <location>
        <begin position="1"/>
        <end position="753"/>
    </location>
</feature>
<feature type="domain" description="Helicase ATP-binding" evidence="3">
    <location>
        <begin position="283"/>
        <end position="458"/>
    </location>
</feature>
<feature type="domain" description="Helicase C-terminal" evidence="4">
    <location>
        <begin position="487"/>
        <end position="636"/>
    </location>
</feature>
<feature type="region of interest" description="Disordered" evidence="5">
    <location>
        <begin position="1"/>
        <end position="20"/>
    </location>
</feature>
<feature type="region of interest" description="Disordered" evidence="5">
    <location>
        <begin position="34"/>
        <end position="74"/>
    </location>
</feature>
<feature type="region of interest" description="Disordered" evidence="5">
    <location>
        <begin position="129"/>
        <end position="205"/>
    </location>
</feature>
<feature type="region of interest" description="Disordered" evidence="5">
    <location>
        <begin position="691"/>
        <end position="753"/>
    </location>
</feature>
<feature type="coiled-coil region" evidence="2">
    <location>
        <begin position="649"/>
        <end position="729"/>
    </location>
</feature>
<feature type="short sequence motif" description="Q motif">
    <location>
        <begin position="252"/>
        <end position="280"/>
    </location>
</feature>
<feature type="short sequence motif" description="DEAD box">
    <location>
        <begin position="406"/>
        <end position="409"/>
    </location>
</feature>
<feature type="compositionally biased region" description="Basic residues" evidence="5">
    <location>
        <begin position="1"/>
        <end position="15"/>
    </location>
</feature>
<feature type="compositionally biased region" description="Acidic residues" evidence="5">
    <location>
        <begin position="36"/>
        <end position="51"/>
    </location>
</feature>
<feature type="compositionally biased region" description="Acidic residues" evidence="5">
    <location>
        <begin position="137"/>
        <end position="147"/>
    </location>
</feature>
<feature type="compositionally biased region" description="Acidic residues" evidence="5">
    <location>
        <begin position="175"/>
        <end position="204"/>
    </location>
</feature>
<feature type="compositionally biased region" description="Basic and acidic residues" evidence="5">
    <location>
        <begin position="697"/>
        <end position="709"/>
    </location>
</feature>
<feature type="compositionally biased region" description="Basic residues" evidence="5">
    <location>
        <begin position="743"/>
        <end position="753"/>
    </location>
</feature>
<feature type="binding site" evidence="3">
    <location>
        <begin position="296"/>
        <end position="303"/>
    </location>
    <ligand>
        <name>ATP</name>
        <dbReference type="ChEBI" id="CHEBI:30616"/>
    </ligand>
</feature>
<evidence type="ECO:0000250" key="1"/>
<evidence type="ECO:0000255" key="2"/>
<evidence type="ECO:0000255" key="3">
    <source>
        <dbReference type="PROSITE-ProRule" id="PRU00541"/>
    </source>
</evidence>
<evidence type="ECO:0000255" key="4">
    <source>
        <dbReference type="PROSITE-ProRule" id="PRU00542"/>
    </source>
</evidence>
<evidence type="ECO:0000256" key="5">
    <source>
        <dbReference type="SAM" id="MobiDB-lite"/>
    </source>
</evidence>
<evidence type="ECO:0000305" key="6"/>
<dbReference type="EC" id="3.6.4.13"/>
<dbReference type="EMBL" id="CR382128">
    <property type="protein sequence ID" value="CAG83247.1"/>
    <property type="molecule type" value="Genomic_DNA"/>
</dbReference>
<dbReference type="RefSeq" id="XP_500994.1">
    <property type="nucleotide sequence ID" value="XM_500994.1"/>
</dbReference>
<dbReference type="SMR" id="Q6CEB8"/>
<dbReference type="FunCoup" id="Q6CEB8">
    <property type="interactions" value="938"/>
</dbReference>
<dbReference type="STRING" id="284591.Q6CEB8"/>
<dbReference type="EnsemblFungi" id="CAG83247">
    <property type="protein sequence ID" value="CAG83247"/>
    <property type="gene ID" value="YALI0_B16896g"/>
</dbReference>
<dbReference type="KEGG" id="yli:2907091"/>
<dbReference type="VEuPathDB" id="FungiDB:YALI0_B16896g"/>
<dbReference type="HOGENOM" id="CLU_003041_3_1_1"/>
<dbReference type="InParanoid" id="Q6CEB8"/>
<dbReference type="OMA" id="MIDPPKQ"/>
<dbReference type="OrthoDB" id="98420at4891"/>
<dbReference type="Proteomes" id="UP000001300">
    <property type="component" value="Chromosome B"/>
</dbReference>
<dbReference type="GO" id="GO:0005730">
    <property type="term" value="C:nucleolus"/>
    <property type="evidence" value="ECO:0000318"/>
    <property type="project" value="GO_Central"/>
</dbReference>
<dbReference type="GO" id="GO:0005524">
    <property type="term" value="F:ATP binding"/>
    <property type="evidence" value="ECO:0007669"/>
    <property type="project" value="UniProtKB-KW"/>
</dbReference>
<dbReference type="GO" id="GO:0016887">
    <property type="term" value="F:ATP hydrolysis activity"/>
    <property type="evidence" value="ECO:0007669"/>
    <property type="project" value="RHEA"/>
</dbReference>
<dbReference type="GO" id="GO:0003723">
    <property type="term" value="F:RNA binding"/>
    <property type="evidence" value="ECO:0007669"/>
    <property type="project" value="UniProtKB-KW"/>
</dbReference>
<dbReference type="GO" id="GO:0003724">
    <property type="term" value="F:RNA helicase activity"/>
    <property type="evidence" value="ECO:0007669"/>
    <property type="project" value="UniProtKB-EC"/>
</dbReference>
<dbReference type="GO" id="GO:0006364">
    <property type="term" value="P:rRNA processing"/>
    <property type="evidence" value="ECO:0007669"/>
    <property type="project" value="UniProtKB-ARBA"/>
</dbReference>
<dbReference type="CDD" id="cd17947">
    <property type="entry name" value="DEADc_DDX27"/>
    <property type="match status" value="1"/>
</dbReference>
<dbReference type="CDD" id="cd18787">
    <property type="entry name" value="SF2_C_DEAD"/>
    <property type="match status" value="1"/>
</dbReference>
<dbReference type="Gene3D" id="3.40.50.300">
    <property type="entry name" value="P-loop containing nucleotide triphosphate hydrolases"/>
    <property type="match status" value="2"/>
</dbReference>
<dbReference type="InterPro" id="IPR011545">
    <property type="entry name" value="DEAD/DEAH_box_helicase_dom"/>
</dbReference>
<dbReference type="InterPro" id="IPR050079">
    <property type="entry name" value="DEAD_box_RNA_helicase"/>
</dbReference>
<dbReference type="InterPro" id="IPR014001">
    <property type="entry name" value="Helicase_ATP-bd"/>
</dbReference>
<dbReference type="InterPro" id="IPR001650">
    <property type="entry name" value="Helicase_C-like"/>
</dbReference>
<dbReference type="InterPro" id="IPR027417">
    <property type="entry name" value="P-loop_NTPase"/>
</dbReference>
<dbReference type="InterPro" id="IPR000629">
    <property type="entry name" value="RNA-helicase_DEAD-box_CS"/>
</dbReference>
<dbReference type="InterPro" id="IPR014014">
    <property type="entry name" value="RNA_helicase_DEAD_Q_motif"/>
</dbReference>
<dbReference type="PANTHER" id="PTHR47959:SF1">
    <property type="entry name" value="ATP-DEPENDENT RNA HELICASE DBPA"/>
    <property type="match status" value="1"/>
</dbReference>
<dbReference type="PANTHER" id="PTHR47959">
    <property type="entry name" value="ATP-DEPENDENT RNA HELICASE RHLE-RELATED"/>
    <property type="match status" value="1"/>
</dbReference>
<dbReference type="Pfam" id="PF00270">
    <property type="entry name" value="DEAD"/>
    <property type="match status" value="1"/>
</dbReference>
<dbReference type="Pfam" id="PF00271">
    <property type="entry name" value="Helicase_C"/>
    <property type="match status" value="1"/>
</dbReference>
<dbReference type="SMART" id="SM00487">
    <property type="entry name" value="DEXDc"/>
    <property type="match status" value="1"/>
</dbReference>
<dbReference type="SMART" id="SM00490">
    <property type="entry name" value="HELICc"/>
    <property type="match status" value="1"/>
</dbReference>
<dbReference type="SUPFAM" id="SSF52540">
    <property type="entry name" value="P-loop containing nucleoside triphosphate hydrolases"/>
    <property type="match status" value="1"/>
</dbReference>
<dbReference type="PROSITE" id="PS00039">
    <property type="entry name" value="DEAD_ATP_HELICASE"/>
    <property type="match status" value="1"/>
</dbReference>
<dbReference type="PROSITE" id="PS51192">
    <property type="entry name" value="HELICASE_ATP_BIND_1"/>
    <property type="match status" value="1"/>
</dbReference>
<dbReference type="PROSITE" id="PS51194">
    <property type="entry name" value="HELICASE_CTER"/>
    <property type="match status" value="1"/>
</dbReference>
<dbReference type="PROSITE" id="PS51195">
    <property type="entry name" value="Q_MOTIF"/>
    <property type="match status" value="1"/>
</dbReference>
<gene>
    <name type="primary">DRS1</name>
    <name type="ordered locus">YALI0B16896g</name>
</gene>
<reference key="1">
    <citation type="journal article" date="2004" name="Nature">
        <title>Genome evolution in yeasts.</title>
        <authorList>
            <person name="Dujon B."/>
            <person name="Sherman D."/>
            <person name="Fischer G."/>
            <person name="Durrens P."/>
            <person name="Casaregola S."/>
            <person name="Lafontaine I."/>
            <person name="de Montigny J."/>
            <person name="Marck C."/>
            <person name="Neuveglise C."/>
            <person name="Talla E."/>
            <person name="Goffard N."/>
            <person name="Frangeul L."/>
            <person name="Aigle M."/>
            <person name="Anthouard V."/>
            <person name="Babour A."/>
            <person name="Barbe V."/>
            <person name="Barnay S."/>
            <person name="Blanchin S."/>
            <person name="Beckerich J.-M."/>
            <person name="Beyne E."/>
            <person name="Bleykasten C."/>
            <person name="Boisrame A."/>
            <person name="Boyer J."/>
            <person name="Cattolico L."/>
            <person name="Confanioleri F."/>
            <person name="de Daruvar A."/>
            <person name="Despons L."/>
            <person name="Fabre E."/>
            <person name="Fairhead C."/>
            <person name="Ferry-Dumazet H."/>
            <person name="Groppi A."/>
            <person name="Hantraye F."/>
            <person name="Hennequin C."/>
            <person name="Jauniaux N."/>
            <person name="Joyet P."/>
            <person name="Kachouri R."/>
            <person name="Kerrest A."/>
            <person name="Koszul R."/>
            <person name="Lemaire M."/>
            <person name="Lesur I."/>
            <person name="Ma L."/>
            <person name="Muller H."/>
            <person name="Nicaud J.-M."/>
            <person name="Nikolski M."/>
            <person name="Oztas S."/>
            <person name="Ozier-Kalogeropoulos O."/>
            <person name="Pellenz S."/>
            <person name="Potier S."/>
            <person name="Richard G.-F."/>
            <person name="Straub M.-L."/>
            <person name="Suleau A."/>
            <person name="Swennen D."/>
            <person name="Tekaia F."/>
            <person name="Wesolowski-Louvel M."/>
            <person name="Westhof E."/>
            <person name="Wirth B."/>
            <person name="Zeniou-Meyer M."/>
            <person name="Zivanovic Y."/>
            <person name="Bolotin-Fukuhara M."/>
            <person name="Thierry A."/>
            <person name="Bouchier C."/>
            <person name="Caudron B."/>
            <person name="Scarpelli C."/>
            <person name="Gaillardin C."/>
            <person name="Weissenbach J."/>
            <person name="Wincker P."/>
            <person name="Souciet J.-L."/>
        </authorList>
    </citation>
    <scope>NUCLEOTIDE SEQUENCE [LARGE SCALE GENOMIC DNA]</scope>
    <source>
        <strain>CLIB 122 / E 150</strain>
    </source>
</reference>
<organism>
    <name type="scientific">Yarrowia lipolytica (strain CLIB 122 / E 150)</name>
    <name type="common">Yeast</name>
    <name type="synonym">Candida lipolytica</name>
    <dbReference type="NCBI Taxonomy" id="284591"/>
    <lineage>
        <taxon>Eukaryota</taxon>
        <taxon>Fungi</taxon>
        <taxon>Dikarya</taxon>
        <taxon>Ascomycota</taxon>
        <taxon>Saccharomycotina</taxon>
        <taxon>Dipodascomycetes</taxon>
        <taxon>Dipodascales</taxon>
        <taxon>Dipodascales incertae sedis</taxon>
        <taxon>Yarrowia</taxon>
    </lineage>
</organism>
<accession>Q6CEB8</accession>
<name>DRS1_YARLI</name>
<sequence>MVKGKVTKPVKKATKSKQSAAMISKVKDDFVMTLDSDGEDLEEESADEKEEVEEKPVKLTKKQKKQKLSEADEELLEREKQAAKAGINPDFQFSLDGFAATSEGLDGWNFEVSKDDNKVQKREVDLDSIIKRKGGLLDEDEDEDEAETDVKMEENEDDLAIDGFGGGVQPGKDMDEPEDEDEENKEEVENEEEEDSDGSDSEAEECMHPDDLVLDDHKGPAIDEGPQDTAEEMAAFYAPEEENNDKTESVHKTFQTLNLSRPVMKGISALGYQAPTPIQSRTIPIALMGKDLVAGAVTGSGKTAAYIIPVLERLLYKSSKVAATKVVVLTPTRELSIQVADVGKKLAQYVSGVRFGLAVGGLNLRVQEQELKTRPEVVIATPGRFIDHVRNSPSFNVDDVEILVIDEADRMLEEGFQQELTEILTLLPKKRQTLLFSATMNSSISSLIQLSLSRPVRVMINPPKQAASGLVQEFVRIRKRDHLKPALLASILKKMDKEQRTIIFVARKETAHRLRIMLGLLGVRIGELHGALSQEQRLQSITAFKKLEVPILVCTDLASRGLDIPKIECVVNYDMPQTHAVYLHRVGRTARAGREGRSITLVGEAAADRAIVREAIKSVSESKQGKAVGRNVDWPEVEKLYSKIEEKGDIVNEILAEEKEEKAMLQAEMEVRKGENLLKYEKEIASRPRRTWFQNAQEKKADETSDKRNLLASNKDKMKKKKDNEEVRMYKKTKTDRKEASKRGKPKGKGKRK</sequence>
<protein>
    <recommendedName>
        <fullName>ATP-dependent RNA helicase DRS1</fullName>
        <ecNumber>3.6.4.13</ecNumber>
    </recommendedName>
</protein>